<keyword id="KW-0007">Acetylation</keyword>
<keyword id="KW-0025">Alternative splicing</keyword>
<keyword id="KW-0436">Ligase</keyword>
<keyword id="KW-0539">Nucleus</keyword>
<keyword id="KW-1185">Reference proteome</keyword>
<keyword id="KW-0833">Ubl conjugation pathway</keyword>
<reference key="1">
    <citation type="journal article" date="2003" name="J. Biol. Chem.">
        <title>The small ubiquitin-like modifier (SUMO) protein modification system in Arabidopsis. Accumulation of SUMO1 and -2 conjugates is increased by stress.</title>
        <authorList>
            <person name="Kurepa J."/>
            <person name="Walker J.M."/>
            <person name="Smalle J."/>
            <person name="Gosink M.M."/>
            <person name="Davis S.J."/>
            <person name="Durham T.L."/>
            <person name="Sung D.Y."/>
            <person name="Vierstra R.D."/>
        </authorList>
    </citation>
    <scope>NUCLEOTIDE SEQUENCE [MRNA] (ISOFORM 1)</scope>
    <source>
        <strain>cv. Columbia</strain>
    </source>
</reference>
<reference key="2">
    <citation type="submission" date="1999-04" db="EMBL/GenBank/DDBJ databases">
        <title>Structural analysis of Arabidopsis thaliana chromosome 5. XI.</title>
        <authorList>
            <person name="Kaneko T."/>
            <person name="Katoh T."/>
            <person name="Asamizu E."/>
            <person name="Sato S."/>
            <person name="Nakamura Y."/>
            <person name="Kotani H."/>
            <person name="Tabata S."/>
        </authorList>
    </citation>
    <scope>NUCLEOTIDE SEQUENCE [LARGE SCALE GENOMIC DNA]</scope>
    <source>
        <strain>cv. Columbia</strain>
    </source>
</reference>
<reference key="3">
    <citation type="journal article" date="2017" name="Plant J.">
        <title>Araport11: a complete reannotation of the Arabidopsis thaliana reference genome.</title>
        <authorList>
            <person name="Cheng C.Y."/>
            <person name="Krishnakumar V."/>
            <person name="Chan A.P."/>
            <person name="Thibaud-Nissen F."/>
            <person name="Schobel S."/>
            <person name="Town C.D."/>
        </authorList>
    </citation>
    <scope>GENOME REANNOTATION</scope>
    <source>
        <strain>cv. Columbia</strain>
    </source>
</reference>
<reference key="4">
    <citation type="journal article" date="2003" name="Science">
        <title>Empirical analysis of transcriptional activity in the Arabidopsis genome.</title>
        <authorList>
            <person name="Yamada K."/>
            <person name="Lim J."/>
            <person name="Dale J.M."/>
            <person name="Chen H."/>
            <person name="Shinn P."/>
            <person name="Palm C.J."/>
            <person name="Southwick A.M."/>
            <person name="Wu H.C."/>
            <person name="Kim C.J."/>
            <person name="Nguyen M."/>
            <person name="Pham P.K."/>
            <person name="Cheuk R.F."/>
            <person name="Karlin-Newmann G."/>
            <person name="Liu S.X."/>
            <person name="Lam B."/>
            <person name="Sakano H."/>
            <person name="Wu T."/>
            <person name="Yu G."/>
            <person name="Miranda M."/>
            <person name="Quach H.L."/>
            <person name="Tripp M."/>
            <person name="Chang C.H."/>
            <person name="Lee J.M."/>
            <person name="Toriumi M.J."/>
            <person name="Chan M.M."/>
            <person name="Tang C.C."/>
            <person name="Onodera C.S."/>
            <person name="Deng J.M."/>
            <person name="Akiyama K."/>
            <person name="Ansari Y."/>
            <person name="Arakawa T."/>
            <person name="Banh J."/>
            <person name="Banno F."/>
            <person name="Bowser L."/>
            <person name="Brooks S.Y."/>
            <person name="Carninci P."/>
            <person name="Chao Q."/>
            <person name="Choy N."/>
            <person name="Enju A."/>
            <person name="Goldsmith A.D."/>
            <person name="Gurjal M."/>
            <person name="Hansen N.F."/>
            <person name="Hayashizaki Y."/>
            <person name="Johnson-Hopson C."/>
            <person name="Hsuan V.W."/>
            <person name="Iida K."/>
            <person name="Karnes M."/>
            <person name="Khan S."/>
            <person name="Koesema E."/>
            <person name="Ishida J."/>
            <person name="Jiang P.X."/>
            <person name="Jones T."/>
            <person name="Kawai J."/>
            <person name="Kamiya A."/>
            <person name="Meyers C."/>
            <person name="Nakajima M."/>
            <person name="Narusaka M."/>
            <person name="Seki M."/>
            <person name="Sakurai T."/>
            <person name="Satou M."/>
            <person name="Tamse R."/>
            <person name="Vaysberg M."/>
            <person name="Wallender E.K."/>
            <person name="Wong C."/>
            <person name="Yamamura Y."/>
            <person name="Yuan S."/>
            <person name="Shinozaki K."/>
            <person name="Davis R.W."/>
            <person name="Theologis A."/>
            <person name="Ecker J.R."/>
        </authorList>
    </citation>
    <scope>NUCLEOTIDE SEQUENCE [LARGE SCALE MRNA] (ISOFORM 1)</scope>
    <source>
        <strain>cv. Columbia</strain>
    </source>
</reference>
<reference key="5">
    <citation type="submission" date="2006-07" db="EMBL/GenBank/DDBJ databases">
        <title>Large-scale analysis of RIKEN Arabidopsis full-length (RAFL) cDNAs.</title>
        <authorList>
            <person name="Totoki Y."/>
            <person name="Seki M."/>
            <person name="Ishida J."/>
            <person name="Nakajima M."/>
            <person name="Enju A."/>
            <person name="Kamiya A."/>
            <person name="Narusaka M."/>
            <person name="Shin-i T."/>
            <person name="Nakagawa M."/>
            <person name="Sakamoto N."/>
            <person name="Oishi K."/>
            <person name="Kohara Y."/>
            <person name="Kobayashi M."/>
            <person name="Toyoda A."/>
            <person name="Sakaki Y."/>
            <person name="Sakurai T."/>
            <person name="Iida K."/>
            <person name="Akiyama K."/>
            <person name="Satou M."/>
            <person name="Toyoda T."/>
            <person name="Konagaya A."/>
            <person name="Carninci P."/>
            <person name="Kawai J."/>
            <person name="Hayashizaki Y."/>
            <person name="Shinozaki K."/>
        </authorList>
    </citation>
    <scope>NUCLEOTIDE SEQUENCE [LARGE SCALE MRNA] (ISOFORM 1)</scope>
    <source>
        <strain>cv. Columbia</strain>
    </source>
</reference>
<reference key="6">
    <citation type="submission" date="2002-03" db="EMBL/GenBank/DDBJ databases">
        <title>Full-length cDNA from Arabidopsis thaliana.</title>
        <authorList>
            <person name="Brover V.V."/>
            <person name="Troukhan M.E."/>
            <person name="Alexandrov N.A."/>
            <person name="Lu Y.-P."/>
            <person name="Flavell R.B."/>
            <person name="Feldmann K.A."/>
        </authorList>
    </citation>
    <scope>NUCLEOTIDE SEQUENCE [LARGE SCALE MRNA] (ISOFORM 2)</scope>
</reference>
<reference key="7">
    <citation type="journal article" date="2007" name="Plant Physiol.">
        <title>Genetic analysis of SUMOylation in Arabidopsis: conjugation of SUMO1 and SUMO2 to nuclear proteins is essential.</title>
        <authorList>
            <person name="Saracco S.A."/>
            <person name="Miller M.J."/>
            <person name="Kurepa J."/>
            <person name="Vierstra R.D."/>
        </authorList>
    </citation>
    <scope>FUNCTION</scope>
</reference>
<reference key="8">
    <citation type="journal article" date="2012" name="Mol. Cell. Proteomics">
        <title>Comparative large-scale characterisation of plant vs. mammal proteins reveals similar and idiosyncratic N-alpha acetylation features.</title>
        <authorList>
            <person name="Bienvenut W.V."/>
            <person name="Sumpton D."/>
            <person name="Martinez A."/>
            <person name="Lilla S."/>
            <person name="Espagne C."/>
            <person name="Meinnel T."/>
            <person name="Giglione C."/>
        </authorList>
    </citation>
    <scope>ACETYLATION [LARGE SCALE ANALYSIS] AT MET-1</scope>
    <scope>IDENTIFICATION BY MASS SPECTROMETRY [LARGE SCALE ANALYSIS]</scope>
</reference>
<proteinExistence type="evidence at protein level"/>
<sequence length="320" mass="35655">MDGDELTEQETALYDRQIRVWGAGAQRRLSKSHVLVSGIKGTVAEFCKNIVLAGVGSVTLLDDRLVTTEVFNANFLILPDENAYVGKTVAEICCDSLKDFNPMVHVSIEKGDLSTLGVDFFEKFDVVVIGYSSRATKKAVNEKCRNLAKDVAFYTVDCRGSCGEIFVDLQNYKYTKKKLDETVECELTFPSFEEAVSVPWKPMPRRTAKLYFAMRVIELFEETEGRKPGECSLSDLPRVLKLKKELCEGNSVSENHIPDILLERLVSNNTEFPPACAIIGGILGQEVIKVISGKGEPLKNFFYFDAEDGKGVIEDLSHKL</sequence>
<organism>
    <name type="scientific">Arabidopsis thaliana</name>
    <name type="common">Mouse-ear cress</name>
    <dbReference type="NCBI Taxonomy" id="3702"/>
    <lineage>
        <taxon>Eukaryota</taxon>
        <taxon>Viridiplantae</taxon>
        <taxon>Streptophyta</taxon>
        <taxon>Embryophyta</taxon>
        <taxon>Tracheophyta</taxon>
        <taxon>Spermatophyta</taxon>
        <taxon>Magnoliopsida</taxon>
        <taxon>eudicotyledons</taxon>
        <taxon>Gunneridae</taxon>
        <taxon>Pentapetalae</taxon>
        <taxon>rosids</taxon>
        <taxon>malvids</taxon>
        <taxon>Brassicales</taxon>
        <taxon>Brassicaceae</taxon>
        <taxon>Camelineae</taxon>
        <taxon>Arabidopsis</taxon>
    </lineage>
</organism>
<dbReference type="EMBL" id="AF510524">
    <property type="protein sequence ID" value="AAN03850.1"/>
    <property type="molecule type" value="mRNA"/>
</dbReference>
<dbReference type="EMBL" id="AB025619">
    <property type="protein sequence ID" value="BAB09143.1"/>
    <property type="molecule type" value="Genomic_DNA"/>
</dbReference>
<dbReference type="EMBL" id="CP002688">
    <property type="protein sequence ID" value="AED95964.1"/>
    <property type="molecule type" value="Genomic_DNA"/>
</dbReference>
<dbReference type="EMBL" id="CP002688">
    <property type="protein sequence ID" value="AED95965.1"/>
    <property type="molecule type" value="Genomic_DNA"/>
</dbReference>
<dbReference type="EMBL" id="AY091012">
    <property type="protein sequence ID" value="AAM14034.1"/>
    <property type="molecule type" value="mRNA"/>
</dbReference>
<dbReference type="EMBL" id="AY117230">
    <property type="protein sequence ID" value="AAM51305.1"/>
    <property type="molecule type" value="mRNA"/>
</dbReference>
<dbReference type="EMBL" id="AK227039">
    <property type="protein sequence ID" value="BAE99099.1"/>
    <property type="molecule type" value="mRNA"/>
</dbReference>
<dbReference type="EMBL" id="AY086686">
    <property type="protein sequence ID" value="AAM63741.1"/>
    <property type="molecule type" value="mRNA"/>
</dbReference>
<dbReference type="RefSeq" id="NP_001032050.1">
    <molecule id="P0DI12-2"/>
    <property type="nucleotide sequence ID" value="NM_001036973.2"/>
</dbReference>
<dbReference type="RefSeq" id="NP_568732.2">
    <molecule id="P0DI12-1"/>
    <property type="nucleotide sequence ID" value="NM_124436.4"/>
</dbReference>
<dbReference type="RefSeq" id="NP_568741.1">
    <molecule id="P0DI12-1"/>
    <property type="nucleotide sequence ID" value="NM_124446.3"/>
</dbReference>
<dbReference type="RefSeq" id="NP_851162.1">
    <molecule id="P0DI12-2"/>
    <property type="nucleotide sequence ID" value="NM_180831.2"/>
</dbReference>
<dbReference type="SMR" id="P0DI12"/>
<dbReference type="BioGRID" id="20373">
    <property type="interactions" value="4"/>
</dbReference>
<dbReference type="BioGRID" id="20385">
    <property type="interactions" value="4"/>
</dbReference>
<dbReference type="FunCoup" id="P0DI12">
    <property type="interactions" value="4320"/>
</dbReference>
<dbReference type="STRING" id="3702.P0DI12"/>
<dbReference type="iPTMnet" id="P0DI12"/>
<dbReference type="PaxDb" id="3702-AT5G50580.2"/>
<dbReference type="EnsemblPlants" id="AT5G50580.1">
    <molecule id="P0DI12-2"/>
    <property type="protein sequence ID" value="AT5G50580.1"/>
    <property type="gene ID" value="AT5G50580"/>
</dbReference>
<dbReference type="EnsemblPlants" id="AT5G50580.2">
    <property type="protein sequence ID" value="AT5G50580.2"/>
    <property type="gene ID" value="AT5G50580"/>
</dbReference>
<dbReference type="EnsemblPlants" id="AT5G50680.1">
    <property type="protein sequence ID" value="AT5G50680.1"/>
    <property type="gene ID" value="AT5G50680"/>
</dbReference>
<dbReference type="EnsemblPlants" id="AT5G50680.2">
    <molecule id="P0DI12-2"/>
    <property type="protein sequence ID" value="AT5G50680.2"/>
    <property type="gene ID" value="AT5G50680"/>
</dbReference>
<dbReference type="GeneID" id="835127"/>
<dbReference type="Gramene" id="AT5G50580.1">
    <molecule id="P0DI12-2"/>
    <property type="protein sequence ID" value="AT5G50580.1"/>
    <property type="gene ID" value="AT5G50580"/>
</dbReference>
<dbReference type="Gramene" id="AT5G50580.2">
    <property type="protein sequence ID" value="AT5G50580.2"/>
    <property type="gene ID" value="AT5G50580"/>
</dbReference>
<dbReference type="Gramene" id="AT5G50680.1">
    <property type="protein sequence ID" value="AT5G50680.1"/>
    <property type="gene ID" value="AT5G50680"/>
</dbReference>
<dbReference type="Gramene" id="AT5G50680.2">
    <molecule id="P0DI12-2"/>
    <property type="protein sequence ID" value="AT5G50680.2"/>
    <property type="gene ID" value="AT5G50680"/>
</dbReference>
<dbReference type="KEGG" id="ath:AT5G50580"/>
<dbReference type="KEGG" id="ath:AT5G50680"/>
<dbReference type="Araport" id="AT5G50580"/>
<dbReference type="TAIR" id="AT5G50580">
    <property type="gene designation" value="SAE1B"/>
</dbReference>
<dbReference type="eggNOG" id="KOG2014">
    <property type="taxonomic scope" value="Eukaryota"/>
</dbReference>
<dbReference type="InParanoid" id="P0DI12"/>
<dbReference type="OMA" id="SENIKCH"/>
<dbReference type="PhylomeDB" id="P0DI12"/>
<dbReference type="UniPathway" id="UPA00886"/>
<dbReference type="PRO" id="PR:P0DI12"/>
<dbReference type="Proteomes" id="UP000006548">
    <property type="component" value="Chromosome 5"/>
</dbReference>
<dbReference type="ExpressionAtlas" id="P0DI12">
    <property type="expression patterns" value="baseline"/>
</dbReference>
<dbReference type="GO" id="GO:0005634">
    <property type="term" value="C:nucleus"/>
    <property type="evidence" value="ECO:0000314"/>
    <property type="project" value="TAIR"/>
</dbReference>
<dbReference type="GO" id="GO:0019948">
    <property type="term" value="F:SUMO activating enzyme activity"/>
    <property type="evidence" value="ECO:0000314"/>
    <property type="project" value="TAIR"/>
</dbReference>
<dbReference type="GO" id="GO:0016925">
    <property type="term" value="P:protein sumoylation"/>
    <property type="evidence" value="ECO:0000314"/>
    <property type="project" value="TAIR"/>
</dbReference>
<dbReference type="CDD" id="cd01492">
    <property type="entry name" value="Aos1_SUMO"/>
    <property type="match status" value="1"/>
</dbReference>
<dbReference type="FunFam" id="3.40.50.720:FF:000404">
    <property type="entry name" value="SUMO-activating enzyme subunit 1B-2"/>
    <property type="match status" value="1"/>
</dbReference>
<dbReference type="Gene3D" id="3.40.50.720">
    <property type="entry name" value="NAD(P)-binding Rossmann-like Domain"/>
    <property type="match status" value="1"/>
</dbReference>
<dbReference type="InterPro" id="IPR045886">
    <property type="entry name" value="ThiF/MoeB/HesA"/>
</dbReference>
<dbReference type="InterPro" id="IPR000594">
    <property type="entry name" value="ThiF_NAD_FAD-bd"/>
</dbReference>
<dbReference type="InterPro" id="IPR035985">
    <property type="entry name" value="Ubiquitin-activating_enz"/>
</dbReference>
<dbReference type="InterPro" id="IPR000011">
    <property type="entry name" value="UBQ/SUMO-activ_enz_E1-like"/>
</dbReference>
<dbReference type="PANTHER" id="PTHR10953:SF162">
    <property type="entry name" value="SUMO-ACTIVATING ENZYME SUBUNIT 1"/>
    <property type="match status" value="1"/>
</dbReference>
<dbReference type="PANTHER" id="PTHR10953">
    <property type="entry name" value="UBIQUITIN-ACTIVATING ENZYME E1"/>
    <property type="match status" value="1"/>
</dbReference>
<dbReference type="Pfam" id="PF00899">
    <property type="entry name" value="ThiF"/>
    <property type="match status" value="1"/>
</dbReference>
<dbReference type="PRINTS" id="PR01849">
    <property type="entry name" value="UBIQUITINACT"/>
</dbReference>
<dbReference type="SUPFAM" id="SSF69572">
    <property type="entry name" value="Activating enzymes of the ubiquitin-like proteins"/>
    <property type="match status" value="1"/>
</dbReference>
<comment type="function">
    <text evidence="2">The dimeric enzyme acts as an E1 ligase for SUMO1 and SUMO2. It mediates ATP-dependent activation of SUMO proteins and formation of a thioester with a conserved cysteine residue on SAE2. Functionally redundant with its paralog SAE1A.</text>
</comment>
<comment type="pathway">
    <text>Protein modification; protein sumoylation.</text>
</comment>
<comment type="subunit">
    <text evidence="1">Heterodimer of SAE1A or SAE1B and SAE2. The complex binds SUMO proteins via SAE2 (By similarity).</text>
</comment>
<comment type="subcellular location">
    <subcellularLocation>
        <location evidence="4">Nucleus</location>
    </subcellularLocation>
</comment>
<comment type="alternative products">
    <event type="alternative splicing"/>
    <isoform>
        <id>P0DI12-1</id>
        <name>1</name>
        <sequence type="displayed"/>
    </isoform>
    <isoform>
        <id>P0DI12-2</id>
        <name>2</name>
        <sequence type="described" ref="VSP_039564"/>
    </isoform>
</comment>
<comment type="similarity">
    <text evidence="4">Belongs to the ubiquitin-activating E1 family.</text>
</comment>
<accession>P0DI12</accession>
<accession>Q8LCB9</accession>
<accession>Q8LKN3</accession>
<accession>Q9LUF3</accession>
<evidence type="ECO:0000250" key="1"/>
<evidence type="ECO:0000269" key="2">
    <source>
    </source>
</evidence>
<evidence type="ECO:0000303" key="3">
    <source ref="6"/>
</evidence>
<evidence type="ECO:0000305" key="4"/>
<evidence type="ECO:0007744" key="5">
    <source>
    </source>
</evidence>
<name>SA1B1_ARATH</name>
<feature type="chain" id="PRO_0000396011" description="SUMO-activating enzyme subunit 1B-1">
    <location>
        <begin position="1"/>
        <end position="320"/>
    </location>
</feature>
<feature type="modified residue" description="N-acetylmethionine" evidence="5">
    <location>
        <position position="1"/>
    </location>
</feature>
<feature type="splice variant" id="VSP_039564" description="In isoform 2." evidence="3">
    <location>
        <begin position="176"/>
        <end position="177"/>
    </location>
</feature>
<feature type="sequence conflict" description="In Ref. 6; AAM63741." evidence="4" ref="6">
    <original>D</original>
    <variation>Y</variation>
    <location>
        <position position="15"/>
    </location>
</feature>
<feature type="sequence conflict" description="In Ref. 6; AAM63741." evidence="4" ref="6">
    <original>D</original>
    <variation>R</variation>
    <location>
        <position position="150"/>
    </location>
</feature>
<feature type="sequence conflict" description="In Ref. 1; AAN03850." evidence="4" ref="1">
    <original>E</original>
    <variation>Q</variation>
    <location>
        <position position="193"/>
    </location>
</feature>
<gene>
    <name type="primary">SAE1B-1</name>
    <name type="synonym">SAE1-2</name>
    <name type="ordered locus">At5g50580</name>
    <name type="ORF">MBA10.22</name>
</gene>
<protein>
    <recommendedName>
        <fullName>SUMO-activating enzyme subunit 1B-1</fullName>
    </recommendedName>
    <alternativeName>
        <fullName>SUMO-activating enzyme subunit 1-2</fullName>
    </alternativeName>
    <alternativeName>
        <fullName>Ubiquitin-like 1-activating enzyme E1A</fullName>
    </alternativeName>
</protein>